<protein>
    <recommendedName>
        <fullName evidence="1">Chaperonin GroEL</fullName>
        <ecNumber evidence="1">5.6.1.7</ecNumber>
    </recommendedName>
    <alternativeName>
        <fullName evidence="1">60 kDa chaperonin</fullName>
    </alternativeName>
    <alternativeName>
        <fullName evidence="1">Chaperonin-60</fullName>
        <shortName evidence="1">Cpn60</shortName>
    </alternativeName>
</protein>
<proteinExistence type="inferred from homology"/>
<comment type="function">
    <text evidence="1">Together with its co-chaperonin GroES, plays an essential role in assisting protein folding. The GroEL-GroES system forms a nano-cage that allows encapsulation of the non-native substrate proteins and provides a physical environment optimized to promote and accelerate protein folding.</text>
</comment>
<comment type="catalytic activity">
    <reaction evidence="1">
        <text>ATP + H2O + a folded polypeptide = ADP + phosphate + an unfolded polypeptide.</text>
        <dbReference type="EC" id="5.6.1.7"/>
    </reaction>
</comment>
<comment type="subunit">
    <text evidence="1">Forms a cylinder of 14 subunits composed of two heptameric rings stacked back-to-back. Interacts with the co-chaperonin GroES.</text>
</comment>
<comment type="subcellular location">
    <subcellularLocation>
        <location evidence="1">Cytoplasm</location>
    </subcellularLocation>
</comment>
<comment type="similarity">
    <text evidence="1">Belongs to the chaperonin (HSP60) family.</text>
</comment>
<name>CH60_FRAP2</name>
<feature type="chain" id="PRO_1000082476" description="Chaperonin GroEL">
    <location>
        <begin position="1"/>
        <end position="543"/>
    </location>
</feature>
<feature type="binding site" evidence="1">
    <location>
        <begin position="30"/>
        <end position="33"/>
    </location>
    <ligand>
        <name>ATP</name>
        <dbReference type="ChEBI" id="CHEBI:30616"/>
    </ligand>
</feature>
<feature type="binding site" evidence="1">
    <location>
        <position position="51"/>
    </location>
    <ligand>
        <name>ATP</name>
        <dbReference type="ChEBI" id="CHEBI:30616"/>
    </ligand>
</feature>
<feature type="binding site" evidence="1">
    <location>
        <begin position="87"/>
        <end position="91"/>
    </location>
    <ligand>
        <name>ATP</name>
        <dbReference type="ChEBI" id="CHEBI:30616"/>
    </ligand>
</feature>
<feature type="binding site" evidence="1">
    <location>
        <position position="415"/>
    </location>
    <ligand>
        <name>ATP</name>
        <dbReference type="ChEBI" id="CHEBI:30616"/>
    </ligand>
</feature>
<feature type="binding site" evidence="1">
    <location>
        <begin position="479"/>
        <end position="481"/>
    </location>
    <ligand>
        <name>ATP</name>
        <dbReference type="ChEBI" id="CHEBI:30616"/>
    </ligand>
</feature>
<feature type="binding site" evidence="1">
    <location>
        <position position="495"/>
    </location>
    <ligand>
        <name>ATP</name>
        <dbReference type="ChEBI" id="CHEBI:30616"/>
    </ligand>
</feature>
<evidence type="ECO:0000255" key="1">
    <source>
        <dbReference type="HAMAP-Rule" id="MF_00600"/>
    </source>
</evidence>
<dbReference type="EC" id="5.6.1.7" evidence="1"/>
<dbReference type="EMBL" id="CP000937">
    <property type="protein sequence ID" value="ABZ87323.1"/>
    <property type="molecule type" value="Genomic_DNA"/>
</dbReference>
<dbReference type="SMR" id="B0TX65"/>
<dbReference type="KEGG" id="fph:Fphi_1099"/>
<dbReference type="eggNOG" id="COG0459">
    <property type="taxonomic scope" value="Bacteria"/>
</dbReference>
<dbReference type="HOGENOM" id="CLU_016503_3_0_6"/>
<dbReference type="GO" id="GO:0005737">
    <property type="term" value="C:cytoplasm"/>
    <property type="evidence" value="ECO:0007669"/>
    <property type="project" value="UniProtKB-SubCell"/>
</dbReference>
<dbReference type="GO" id="GO:0005524">
    <property type="term" value="F:ATP binding"/>
    <property type="evidence" value="ECO:0007669"/>
    <property type="project" value="UniProtKB-UniRule"/>
</dbReference>
<dbReference type="GO" id="GO:0140662">
    <property type="term" value="F:ATP-dependent protein folding chaperone"/>
    <property type="evidence" value="ECO:0007669"/>
    <property type="project" value="InterPro"/>
</dbReference>
<dbReference type="GO" id="GO:0016853">
    <property type="term" value="F:isomerase activity"/>
    <property type="evidence" value="ECO:0007669"/>
    <property type="project" value="UniProtKB-KW"/>
</dbReference>
<dbReference type="GO" id="GO:0051082">
    <property type="term" value="F:unfolded protein binding"/>
    <property type="evidence" value="ECO:0007669"/>
    <property type="project" value="UniProtKB-UniRule"/>
</dbReference>
<dbReference type="GO" id="GO:0042026">
    <property type="term" value="P:protein refolding"/>
    <property type="evidence" value="ECO:0007669"/>
    <property type="project" value="UniProtKB-UniRule"/>
</dbReference>
<dbReference type="CDD" id="cd03344">
    <property type="entry name" value="GroEL"/>
    <property type="match status" value="1"/>
</dbReference>
<dbReference type="FunFam" id="1.10.560.10:FF:000001">
    <property type="entry name" value="60 kDa chaperonin"/>
    <property type="match status" value="1"/>
</dbReference>
<dbReference type="FunFam" id="3.50.7.10:FF:000001">
    <property type="entry name" value="60 kDa chaperonin"/>
    <property type="match status" value="1"/>
</dbReference>
<dbReference type="Gene3D" id="3.50.7.10">
    <property type="entry name" value="GroEL"/>
    <property type="match status" value="1"/>
</dbReference>
<dbReference type="Gene3D" id="1.10.560.10">
    <property type="entry name" value="GroEL-like equatorial domain"/>
    <property type="match status" value="1"/>
</dbReference>
<dbReference type="Gene3D" id="3.30.260.10">
    <property type="entry name" value="TCP-1-like chaperonin intermediate domain"/>
    <property type="match status" value="1"/>
</dbReference>
<dbReference type="HAMAP" id="MF_00600">
    <property type="entry name" value="CH60"/>
    <property type="match status" value="1"/>
</dbReference>
<dbReference type="InterPro" id="IPR018370">
    <property type="entry name" value="Chaperonin_Cpn60_CS"/>
</dbReference>
<dbReference type="InterPro" id="IPR001844">
    <property type="entry name" value="Cpn60/GroEL"/>
</dbReference>
<dbReference type="InterPro" id="IPR002423">
    <property type="entry name" value="Cpn60/GroEL/TCP-1"/>
</dbReference>
<dbReference type="InterPro" id="IPR027409">
    <property type="entry name" value="GroEL-like_apical_dom_sf"/>
</dbReference>
<dbReference type="InterPro" id="IPR027413">
    <property type="entry name" value="GROEL-like_equatorial_sf"/>
</dbReference>
<dbReference type="InterPro" id="IPR027410">
    <property type="entry name" value="TCP-1-like_intermed_sf"/>
</dbReference>
<dbReference type="NCBIfam" id="TIGR02348">
    <property type="entry name" value="GroEL"/>
    <property type="match status" value="1"/>
</dbReference>
<dbReference type="NCBIfam" id="NF000592">
    <property type="entry name" value="PRK00013.1"/>
    <property type="match status" value="1"/>
</dbReference>
<dbReference type="NCBIfam" id="NF009487">
    <property type="entry name" value="PRK12849.1"/>
    <property type="match status" value="1"/>
</dbReference>
<dbReference type="NCBIfam" id="NF009488">
    <property type="entry name" value="PRK12850.1"/>
    <property type="match status" value="1"/>
</dbReference>
<dbReference type="NCBIfam" id="NF009489">
    <property type="entry name" value="PRK12851.1"/>
    <property type="match status" value="1"/>
</dbReference>
<dbReference type="PANTHER" id="PTHR45633">
    <property type="entry name" value="60 KDA HEAT SHOCK PROTEIN, MITOCHONDRIAL"/>
    <property type="match status" value="1"/>
</dbReference>
<dbReference type="Pfam" id="PF00118">
    <property type="entry name" value="Cpn60_TCP1"/>
    <property type="match status" value="1"/>
</dbReference>
<dbReference type="PRINTS" id="PR00298">
    <property type="entry name" value="CHAPERONIN60"/>
</dbReference>
<dbReference type="SUPFAM" id="SSF52029">
    <property type="entry name" value="GroEL apical domain-like"/>
    <property type="match status" value="1"/>
</dbReference>
<dbReference type="SUPFAM" id="SSF48592">
    <property type="entry name" value="GroEL equatorial domain-like"/>
    <property type="match status" value="1"/>
</dbReference>
<dbReference type="SUPFAM" id="SSF54849">
    <property type="entry name" value="GroEL-intermediate domain like"/>
    <property type="match status" value="1"/>
</dbReference>
<dbReference type="PROSITE" id="PS00296">
    <property type="entry name" value="CHAPERONINS_CPN60"/>
    <property type="match status" value="1"/>
</dbReference>
<organism>
    <name type="scientific">Francisella philomiragia subsp. philomiragia (strain ATCC 25017 / CCUG 19701 / FSC 153 / O#319-036)</name>
    <dbReference type="NCBI Taxonomy" id="484022"/>
    <lineage>
        <taxon>Bacteria</taxon>
        <taxon>Pseudomonadati</taxon>
        <taxon>Pseudomonadota</taxon>
        <taxon>Gammaproteobacteria</taxon>
        <taxon>Thiotrichales</taxon>
        <taxon>Francisellaceae</taxon>
        <taxon>Francisella</taxon>
    </lineage>
</organism>
<gene>
    <name evidence="1" type="primary">groEL</name>
    <name evidence="1" type="synonym">groL</name>
    <name type="ordered locus">Fphi_1099</name>
</gene>
<reference key="1">
    <citation type="submission" date="2007-12" db="EMBL/GenBank/DDBJ databases">
        <title>Complete sequence of chromosome of Francisella philomiragia subsp. philomiragia ATCC 25017.</title>
        <authorList>
            <consortium name="US DOE Joint Genome Institute"/>
            <person name="Copeland A."/>
            <person name="Lucas S."/>
            <person name="Lapidus A."/>
            <person name="Barry K."/>
            <person name="Detter J.C."/>
            <person name="Glavina del Rio T."/>
            <person name="Hammon N."/>
            <person name="Israni S."/>
            <person name="Dalin E."/>
            <person name="Tice H."/>
            <person name="Pitluck S."/>
            <person name="Chain P."/>
            <person name="Malfatti S."/>
            <person name="Shin M."/>
            <person name="Vergez L."/>
            <person name="Schmutz J."/>
            <person name="Larimer F."/>
            <person name="Land M."/>
            <person name="Hauser L."/>
            <person name="Richardson P."/>
        </authorList>
    </citation>
    <scope>NUCLEOTIDE SEQUENCE [LARGE SCALE GENOMIC DNA]</scope>
    <source>
        <strain>ATCC 25017 / CCUG 19701 / FSC 153 / O#319-036</strain>
    </source>
</reference>
<accession>B0TX65</accession>
<keyword id="KW-0067">ATP-binding</keyword>
<keyword id="KW-0143">Chaperone</keyword>
<keyword id="KW-0963">Cytoplasm</keyword>
<keyword id="KW-0413">Isomerase</keyword>
<keyword id="KW-0547">Nucleotide-binding</keyword>
<sequence length="543" mass="57158">MAAKQVLFSDEARAKMLDGVNTLANAVKVTLGPKGRNVVLDKAYGAPTITKDGVSVAKEIELEDKFENMGAQIVKEVASKTADVAGDGTTTATVLAQALLTEGLKAVAAGMNPMDLKRGIDKAAAKLVEELKVLSKPCSDTKSIEQVGTISANSDSTVGKLIAEAMAKVGKEGVITVEEGKGFEDELDVVEGMQFDRGYLSPYFATNQENMTTDLESPYILLVDKKISNIRELLPVLEGVSKSGKALLIIAEDVESEALATLVVNNMRGVVKVCAVKAPGFGDRRKAMLEDIAILTGATVISEDLGMKLEEANMEHLGTASRVQVSKDDTTIIDGAGNKDAIVNRVNQLKANVAEATSDYDKEKLQERLAKLSGGVAVIRVGAVTEAEMKEKKDRVDDALHATRAAVEEGIVAGGGVALIRAQKALDGLVGDNDDQNHGIALLKKAIEAPLRQIVSNAGGESSVVVNEVKAKEGNYGYNAANDTYGDMVEMGILDPTKVTRSALQHAASIAGLMITTEAMVAEIKEDAPAMPMGGMGGMPGMM</sequence>